<proteinExistence type="uncertain"/>
<name>NBPF5_HUMAN</name>
<sequence>MVVSADPLSSERAEMNILEINQELRSQLAESNQQFRDLKEKFLITQATAYSLANQLKKYKCEEYKDIIDSVLRDELQSMEKLAEKLRQAEELRQYKALVHSQAKELTQLREKLREGRDASRWLNKHLKTLLTPDDPDKSQGQDLREQLAEGHRLAEHLVHKLSPENDEDEDEDEDDKDEEVEKVQESPAPREVQKTEEKEVPQDSLEECAVTCSNSHNPSNSNQPHRSTKITFKEHEVDSALVVESEHPHDEEEEALNIPPENQNDHEEEEGKAPVPPRHHDKSNSYRHREVSFLALDEQKVCSAQDVARDYSNPKWDETSLGFLDTPLARRESVALKGRTRSWQHSSHAN</sequence>
<keyword id="KW-0175">Coiled coil</keyword>
<keyword id="KW-0963">Cytoplasm</keyword>
<keyword id="KW-1185">Reference proteome</keyword>
<gene>
    <name evidence="6" type="primary">NBPF5P</name>
    <name type="synonym">NBPF5</name>
</gene>
<feature type="chain" id="PRO_0000288040" description="Putative NBPF family member NBPF5">
    <location>
        <begin position="1"/>
        <end position="351"/>
    </location>
</feature>
<feature type="domain" description="Olduvai" evidence="2">
    <location>
        <begin position="174"/>
        <end position="261"/>
    </location>
</feature>
<feature type="region of interest" description="Disordered" evidence="3">
    <location>
        <begin position="157"/>
        <end position="285"/>
    </location>
</feature>
<feature type="coiled-coil region" evidence="1">
    <location>
        <begin position="10"/>
        <end position="43"/>
    </location>
</feature>
<feature type="coiled-coil region" evidence="1">
    <location>
        <begin position="69"/>
        <end position="115"/>
    </location>
</feature>
<feature type="compositionally biased region" description="Acidic residues" evidence="3">
    <location>
        <begin position="165"/>
        <end position="179"/>
    </location>
</feature>
<feature type="compositionally biased region" description="Basic and acidic residues" evidence="3">
    <location>
        <begin position="192"/>
        <end position="202"/>
    </location>
</feature>
<feature type="compositionally biased region" description="Low complexity" evidence="3">
    <location>
        <begin position="214"/>
        <end position="226"/>
    </location>
</feature>
<feature type="compositionally biased region" description="Basic and acidic residues" evidence="3">
    <location>
        <begin position="232"/>
        <end position="251"/>
    </location>
</feature>
<feature type="compositionally biased region" description="Basic and acidic residues" evidence="3">
    <location>
        <begin position="264"/>
        <end position="273"/>
    </location>
</feature>
<accession>Q86XG9</accession>
<comment type="subcellular location">
    <subcellularLocation>
        <location evidence="5">Cytoplasm</location>
    </subcellularLocation>
</comment>
<comment type="tissue specificity">
    <text evidence="4">Expressed in brain and medulla.</text>
</comment>
<comment type="miscellaneous">
    <text>Encoded by one of the numerous copies of NBPF genes clustered in the p36, p12 and q21 region of the chromosome 1.</text>
</comment>
<comment type="similarity">
    <text evidence="5">Belongs to the NBPF family.</text>
</comment>
<comment type="caution">
    <text evidence="5">Could be the product of a pseudogene.</text>
</comment>
<comment type="sequence caution" evidence="5">
    <conflict type="erroneous initiation">
        <sequence resource="EMBL-CDS" id="AAH43522"/>
    </conflict>
    <text>Extended N-terminus.</text>
</comment>
<organism>
    <name type="scientific">Homo sapiens</name>
    <name type="common">Human</name>
    <dbReference type="NCBI Taxonomy" id="9606"/>
    <lineage>
        <taxon>Eukaryota</taxon>
        <taxon>Metazoa</taxon>
        <taxon>Chordata</taxon>
        <taxon>Craniata</taxon>
        <taxon>Vertebrata</taxon>
        <taxon>Euteleostomi</taxon>
        <taxon>Mammalia</taxon>
        <taxon>Eutheria</taxon>
        <taxon>Euarchontoglires</taxon>
        <taxon>Primates</taxon>
        <taxon>Haplorrhini</taxon>
        <taxon>Catarrhini</taxon>
        <taxon>Hominidae</taxon>
        <taxon>Homo</taxon>
    </lineage>
</organism>
<evidence type="ECO:0000255" key="1"/>
<evidence type="ECO:0000255" key="2">
    <source>
        <dbReference type="PROSITE-ProRule" id="PRU00647"/>
    </source>
</evidence>
<evidence type="ECO:0000256" key="3">
    <source>
        <dbReference type="SAM" id="MobiDB-lite"/>
    </source>
</evidence>
<evidence type="ECO:0000269" key="4">
    <source>
    </source>
</evidence>
<evidence type="ECO:0000305" key="5"/>
<evidence type="ECO:0000312" key="6">
    <source>
        <dbReference type="HGNC" id="HGNC:24491"/>
    </source>
</evidence>
<dbReference type="EMBL" id="BC043522">
    <property type="protein sequence ID" value="AAH43522.1"/>
    <property type="status" value="ALT_INIT"/>
    <property type="molecule type" value="mRNA"/>
</dbReference>
<dbReference type="BioMuta" id="HGNC:24491"/>
<dbReference type="DMDM" id="152123237"/>
<dbReference type="MassIVE" id="Q86XG9"/>
<dbReference type="AGR" id="HGNC:24491"/>
<dbReference type="GeneCards" id="NBPF5P"/>
<dbReference type="HGNC" id="HGNC:24491">
    <property type="gene designation" value="NBPF5P"/>
</dbReference>
<dbReference type="MIM" id="613995">
    <property type="type" value="gene"/>
</dbReference>
<dbReference type="neXtProt" id="NX_Q86XG9"/>
<dbReference type="InParanoid" id="Q86XG9"/>
<dbReference type="PAN-GO" id="Q86XG9">
    <property type="GO annotations" value="0 GO annotations based on evolutionary models"/>
</dbReference>
<dbReference type="Pharos" id="Q86XG9">
    <property type="development level" value="Tdark"/>
</dbReference>
<dbReference type="PRO" id="PR:Q86XG9"/>
<dbReference type="Proteomes" id="UP000005640">
    <property type="component" value="Unplaced"/>
</dbReference>
<dbReference type="RNAct" id="Q86XG9">
    <property type="molecule type" value="protein"/>
</dbReference>
<dbReference type="GO" id="GO:0005737">
    <property type="term" value="C:cytoplasm"/>
    <property type="evidence" value="ECO:0007669"/>
    <property type="project" value="UniProtKB-SubCell"/>
</dbReference>
<dbReference type="Gene3D" id="1.20.5.1700">
    <property type="match status" value="1"/>
</dbReference>
<dbReference type="InterPro" id="IPR055306">
    <property type="entry name" value="NBPF"/>
</dbReference>
<dbReference type="InterPro" id="IPR010630">
    <property type="entry name" value="Olduvai_dom"/>
</dbReference>
<dbReference type="PANTHER" id="PTHR14199:SF29">
    <property type="entry name" value="NEUROBLASTOMA BREAKPOINT FAMILY MEMBER 4-RELATED"/>
    <property type="match status" value="1"/>
</dbReference>
<dbReference type="PANTHER" id="PTHR14199">
    <property type="entry name" value="NEUROBLASTOMA BREAKPOINT FAMILY MEMBER 6-LIKE PROTEIN"/>
    <property type="match status" value="1"/>
</dbReference>
<dbReference type="Pfam" id="PF06758">
    <property type="entry name" value="Olduvai"/>
    <property type="match status" value="1"/>
</dbReference>
<dbReference type="SMART" id="SM01148">
    <property type="entry name" value="DUF1220"/>
    <property type="match status" value="2"/>
</dbReference>
<dbReference type="PROSITE" id="PS51316">
    <property type="entry name" value="ODV"/>
    <property type="match status" value="1"/>
</dbReference>
<reference key="1">
    <citation type="journal article" date="2004" name="Genome Res.">
        <title>The status, quality, and expansion of the NIH full-length cDNA project: the Mammalian Gene Collection (MGC).</title>
        <authorList>
            <consortium name="The MGC Project Team"/>
        </authorList>
    </citation>
    <scope>NUCLEOTIDE SEQUENCE [LARGE SCALE MRNA]</scope>
    <source>
        <tissue>Brain</tissue>
    </source>
</reference>
<reference key="2">
    <citation type="journal article" date="2005" name="Mol. Biol. Evol.">
        <title>A novel gene family NBPF: intricate structure generated by gene duplications during primate evolution.</title>
        <authorList>
            <person name="Vandepoele K."/>
            <person name="Van Roy N."/>
            <person name="Staes K."/>
            <person name="Speleman F."/>
            <person name="van Roy F."/>
        </authorList>
    </citation>
    <scope>TISSUE SPECIFICITY</scope>
</reference>
<protein>
    <recommendedName>
        <fullName evidence="5">Putative NBPF family member NBPF5</fullName>
    </recommendedName>
    <alternativeName>
        <fullName>Putative neuroblastoma breakpoint family member 5</fullName>
    </alternativeName>
</protein>